<feature type="chain" id="PRO_0000220711" description="Putative lipoxygenase 5">
    <location>
        <begin position="1"/>
        <end position="899"/>
    </location>
</feature>
<feature type="domain" description="PLAT" evidence="2">
    <location>
        <begin position="68"/>
        <end position="204"/>
    </location>
</feature>
<feature type="domain" description="Lipoxygenase" evidence="3">
    <location>
        <begin position="207"/>
        <end position="899"/>
    </location>
</feature>
<feature type="region of interest" description="Disordered" evidence="4">
    <location>
        <begin position="15"/>
        <end position="34"/>
    </location>
</feature>
<feature type="region of interest" description="Disordered" evidence="4">
    <location>
        <begin position="48"/>
        <end position="68"/>
    </location>
</feature>
<feature type="region of interest" description="Disordered" evidence="4">
    <location>
        <begin position="258"/>
        <end position="291"/>
    </location>
</feature>
<feature type="binding site" evidence="3">
    <location>
        <position position="559"/>
    </location>
    <ligand>
        <name>Fe cation</name>
        <dbReference type="ChEBI" id="CHEBI:24875"/>
        <note>catalytic</note>
    </ligand>
</feature>
<feature type="binding site" evidence="3">
    <location>
        <position position="564"/>
    </location>
    <ligand>
        <name>Fe cation</name>
        <dbReference type="ChEBI" id="CHEBI:24875"/>
        <note>catalytic</note>
    </ligand>
</feature>
<feature type="binding site" evidence="3">
    <location>
        <position position="751"/>
    </location>
    <ligand>
        <name>Fe cation</name>
        <dbReference type="ChEBI" id="CHEBI:24875"/>
        <note>catalytic</note>
    </ligand>
</feature>
<feature type="binding site" evidence="3">
    <location>
        <position position="755"/>
    </location>
    <ligand>
        <name>Fe cation</name>
        <dbReference type="ChEBI" id="CHEBI:24875"/>
        <note>catalytic</note>
    </ligand>
</feature>
<feature type="binding site" evidence="3">
    <location>
        <position position="899"/>
    </location>
    <ligand>
        <name>Fe cation</name>
        <dbReference type="ChEBI" id="CHEBI:24875"/>
        <note>catalytic</note>
    </ligand>
</feature>
<sequence length="899" mass="100082">MRGGAGMCFASMEAAGSRGMGKGASRRRTARSTAPVGALVERVVVAPAPVEQQRGAGRPEAHPQSVAARAVVTVRRRRKEDAKDRFAEQLDALADRVGRSVLLELVSTETDPRKGTPKKSKPSALVGWFDKKDVKAERVVYTAEFAVDAGFGEPGAVTVLNRHQREFYIESIVVEGFPTGPAHFTCNSWVQPTRVSRDRRVFFSNRPYLPSETPPGLRELRLRELADLRGDGTGERRITDRVYDYDVYNDLGNPDKGVASARPVLGGEQMPYPRRMRTGRPSTATDASAESRVEYPEPIYVSRDEEFEEGKNEMLSEGAIKALLHNFMPLLVSSVSPDIRDFAGFHDVDNLFKEGLRLKQALHDQLFQKIPFVRKIQENSEGLLRYDTPDIIKKDKFAWLRDDEFARQALAGINPVNIERLQAFPPVSKLDPAVYGPPESAITEEHIIGHLDGMSVQEAVEGSRLYMLDYHDIFLPFLDRINAQDGRKAYGTRAVFFLTAAGTLKPIAIELCLPPMTDGCKRAKRVFTPPADATSNWLWQLAKAHVCSNDAGVHQLINHWLRTHACMEPFIIAAHRQMSAMHPIFKLLKPHMRYTLKINALARQILINGDGVIESGFTPGNVCMEMSAFAYRELWRLDQEGLPADLIRRGMAVEDPSQPHGLRLLIEDYPYAADGLLLWSAISRWCEAYVAAYYPSDEAVQADYELQSWYAEAVQSGHADKRGAPWWPRLSTPGDLASLLTTLVWLCSAQHAALNFGQYPLGGYIPNRPPLMRRLVPAEGDPEYAHLVADPHRFFLSALPSLTQTTTFMTVIDTLSTHSADEEYLGERPDEAWTADPAALAAAREFAADVRRAEEEIERRNADPSRRNRCGAGVLPYELMAPSSGPGITCRGVPNSVTI</sequence>
<keyword id="KW-0223">Dioxygenase</keyword>
<keyword id="KW-0275">Fatty acid biosynthesis</keyword>
<keyword id="KW-0276">Fatty acid metabolism</keyword>
<keyword id="KW-0408">Iron</keyword>
<keyword id="KW-0444">Lipid biosynthesis</keyword>
<keyword id="KW-0443">Lipid metabolism</keyword>
<keyword id="KW-0479">Metal-binding</keyword>
<keyword id="KW-0560">Oxidoreductase</keyword>
<keyword id="KW-0925">Oxylipin biosynthesis</keyword>
<keyword id="KW-1185">Reference proteome</keyword>
<gene>
    <name type="ordered locus">Os04g0447100</name>
    <name type="ordered locus">LOC_Os04g37430</name>
    <name type="ORF">OSJNBa0064H22.1</name>
</gene>
<reference key="1">
    <citation type="journal article" date="2002" name="Nature">
        <title>Sequence and analysis of rice chromosome 4.</title>
        <authorList>
            <person name="Feng Q."/>
            <person name="Zhang Y."/>
            <person name="Hao P."/>
            <person name="Wang S."/>
            <person name="Fu G."/>
            <person name="Huang Y."/>
            <person name="Li Y."/>
            <person name="Zhu J."/>
            <person name="Liu Y."/>
            <person name="Hu X."/>
            <person name="Jia P."/>
            <person name="Zhang Y."/>
            <person name="Zhao Q."/>
            <person name="Ying K."/>
            <person name="Yu S."/>
            <person name="Tang Y."/>
            <person name="Weng Q."/>
            <person name="Zhang L."/>
            <person name="Lu Y."/>
            <person name="Mu J."/>
            <person name="Lu Y."/>
            <person name="Zhang L.S."/>
            <person name="Yu Z."/>
            <person name="Fan D."/>
            <person name="Liu X."/>
            <person name="Lu T."/>
            <person name="Li C."/>
            <person name="Wu Y."/>
            <person name="Sun T."/>
            <person name="Lei H."/>
            <person name="Li T."/>
            <person name="Hu H."/>
            <person name="Guan J."/>
            <person name="Wu M."/>
            <person name="Zhang R."/>
            <person name="Zhou B."/>
            <person name="Chen Z."/>
            <person name="Chen L."/>
            <person name="Jin Z."/>
            <person name="Wang R."/>
            <person name="Yin H."/>
            <person name="Cai Z."/>
            <person name="Ren S."/>
            <person name="Lv G."/>
            <person name="Gu W."/>
            <person name="Zhu G."/>
            <person name="Tu Y."/>
            <person name="Jia J."/>
            <person name="Zhang Y."/>
            <person name="Chen J."/>
            <person name="Kang H."/>
            <person name="Chen X."/>
            <person name="Shao C."/>
            <person name="Sun Y."/>
            <person name="Hu Q."/>
            <person name="Zhang X."/>
            <person name="Zhang W."/>
            <person name="Wang L."/>
            <person name="Ding C."/>
            <person name="Sheng H."/>
            <person name="Gu J."/>
            <person name="Chen S."/>
            <person name="Ni L."/>
            <person name="Zhu F."/>
            <person name="Chen W."/>
            <person name="Lan L."/>
            <person name="Lai Y."/>
            <person name="Cheng Z."/>
            <person name="Gu M."/>
            <person name="Jiang J."/>
            <person name="Li J."/>
            <person name="Hong G."/>
            <person name="Xue Y."/>
            <person name="Han B."/>
        </authorList>
    </citation>
    <scope>NUCLEOTIDE SEQUENCE [LARGE SCALE GENOMIC DNA]</scope>
    <source>
        <strain>cv. Nipponbare</strain>
    </source>
</reference>
<reference key="2">
    <citation type="journal article" date="2005" name="Nature">
        <title>The map-based sequence of the rice genome.</title>
        <authorList>
            <consortium name="International rice genome sequencing project (IRGSP)"/>
        </authorList>
    </citation>
    <scope>NUCLEOTIDE SEQUENCE [LARGE SCALE GENOMIC DNA]</scope>
    <source>
        <strain>cv. Nipponbare</strain>
    </source>
</reference>
<reference key="3">
    <citation type="journal article" date="2013" name="Rice">
        <title>Improvement of the Oryza sativa Nipponbare reference genome using next generation sequence and optical map data.</title>
        <authorList>
            <person name="Kawahara Y."/>
            <person name="de la Bastide M."/>
            <person name="Hamilton J.P."/>
            <person name="Kanamori H."/>
            <person name="McCombie W.R."/>
            <person name="Ouyang S."/>
            <person name="Schwartz D.C."/>
            <person name="Tanaka T."/>
            <person name="Wu J."/>
            <person name="Zhou S."/>
            <person name="Childs K.L."/>
            <person name="Davidson R.M."/>
            <person name="Lin H."/>
            <person name="Quesada-Ocampo L."/>
            <person name="Vaillancourt B."/>
            <person name="Sakai H."/>
            <person name="Lee S.S."/>
            <person name="Kim J."/>
            <person name="Numa H."/>
            <person name="Itoh T."/>
            <person name="Buell C.R."/>
            <person name="Matsumoto T."/>
        </authorList>
    </citation>
    <scope>GENOME REANNOTATION</scope>
    <source>
        <strain>cv. Nipponbare</strain>
    </source>
</reference>
<protein>
    <recommendedName>
        <fullName>Putative lipoxygenase 5</fullName>
        <ecNumber>1.13.11.12</ecNumber>
    </recommendedName>
</protein>
<name>LOX5_ORYSJ</name>
<organism>
    <name type="scientific">Oryza sativa subsp. japonica</name>
    <name type="common">Rice</name>
    <dbReference type="NCBI Taxonomy" id="39947"/>
    <lineage>
        <taxon>Eukaryota</taxon>
        <taxon>Viridiplantae</taxon>
        <taxon>Streptophyta</taxon>
        <taxon>Embryophyta</taxon>
        <taxon>Tracheophyta</taxon>
        <taxon>Spermatophyta</taxon>
        <taxon>Magnoliopsida</taxon>
        <taxon>Liliopsida</taxon>
        <taxon>Poales</taxon>
        <taxon>Poaceae</taxon>
        <taxon>BOP clade</taxon>
        <taxon>Oryzoideae</taxon>
        <taxon>Oryzeae</taxon>
        <taxon>Oryzinae</taxon>
        <taxon>Oryza</taxon>
        <taxon>Oryza sativa</taxon>
    </lineage>
</organism>
<evidence type="ECO:0000250" key="1"/>
<evidence type="ECO:0000255" key="2">
    <source>
        <dbReference type="PROSITE-ProRule" id="PRU00152"/>
    </source>
</evidence>
<evidence type="ECO:0000255" key="3">
    <source>
        <dbReference type="PROSITE-ProRule" id="PRU00726"/>
    </source>
</evidence>
<evidence type="ECO:0000256" key="4">
    <source>
        <dbReference type="SAM" id="MobiDB-lite"/>
    </source>
</evidence>
<evidence type="ECO:0000305" key="5"/>
<accession>Q7XV13</accession>
<proteinExistence type="inferred from homology"/>
<dbReference type="EC" id="1.13.11.12"/>
<dbReference type="EMBL" id="AL606448">
    <property type="protein sequence ID" value="CAD40882.2"/>
    <property type="molecule type" value="Genomic_DNA"/>
</dbReference>
<dbReference type="EMBL" id="AP014960">
    <property type="status" value="NOT_ANNOTATED_CDS"/>
    <property type="molecule type" value="Genomic_DNA"/>
</dbReference>
<dbReference type="SMR" id="Q7XV13"/>
<dbReference type="FunCoup" id="Q7XV13">
    <property type="interactions" value="213"/>
</dbReference>
<dbReference type="STRING" id="39947.Q7XV13"/>
<dbReference type="PaxDb" id="39947-Q7XV13"/>
<dbReference type="eggNOG" id="ENOG502QQSP">
    <property type="taxonomic scope" value="Eukaryota"/>
</dbReference>
<dbReference type="HOGENOM" id="CLU_004282_0_0_1"/>
<dbReference type="InParanoid" id="Q7XV13"/>
<dbReference type="PlantReactome" id="R-OSA-1119332">
    <property type="pathway name" value="Jasmonic acid biosynthesis"/>
</dbReference>
<dbReference type="PlantReactome" id="R-OSA-1119566">
    <property type="pathway name" value="Divinyl ether biosynthesis II (13-LOX)"/>
</dbReference>
<dbReference type="PlantReactome" id="R-OSA-1119618">
    <property type="pathway name" value="13-LOX and 13-HPL pathway"/>
</dbReference>
<dbReference type="UniPathway" id="UPA00382"/>
<dbReference type="Proteomes" id="UP000000763">
    <property type="component" value="Chromosome 4"/>
</dbReference>
<dbReference type="Proteomes" id="UP000059680">
    <property type="component" value="Chromosome 4"/>
</dbReference>
<dbReference type="GO" id="GO:0016165">
    <property type="term" value="F:linoleate 13S-lipoxygenase activity"/>
    <property type="evidence" value="ECO:0007669"/>
    <property type="project" value="UniProtKB-EC"/>
</dbReference>
<dbReference type="GO" id="GO:0046872">
    <property type="term" value="F:metal ion binding"/>
    <property type="evidence" value="ECO:0007669"/>
    <property type="project" value="UniProtKB-KW"/>
</dbReference>
<dbReference type="GO" id="GO:0016702">
    <property type="term" value="F:oxidoreductase activity, acting on single donors with incorporation of molecular oxygen, incorporation of two atoms of oxygen"/>
    <property type="evidence" value="ECO:0000318"/>
    <property type="project" value="GO_Central"/>
</dbReference>
<dbReference type="GO" id="GO:0006633">
    <property type="term" value="P:fatty acid biosynthetic process"/>
    <property type="evidence" value="ECO:0007669"/>
    <property type="project" value="UniProtKB-KW"/>
</dbReference>
<dbReference type="GO" id="GO:0034440">
    <property type="term" value="P:lipid oxidation"/>
    <property type="evidence" value="ECO:0000318"/>
    <property type="project" value="GO_Central"/>
</dbReference>
<dbReference type="GO" id="GO:0031408">
    <property type="term" value="P:oxylipin biosynthetic process"/>
    <property type="evidence" value="ECO:0007669"/>
    <property type="project" value="UniProtKB-UniPathway"/>
</dbReference>
<dbReference type="CDD" id="cd01751">
    <property type="entry name" value="PLAT_LH2"/>
    <property type="match status" value="1"/>
</dbReference>
<dbReference type="FunFam" id="1.20.245.10:FF:000002">
    <property type="entry name" value="Lipoxygenase"/>
    <property type="match status" value="1"/>
</dbReference>
<dbReference type="FunFam" id="3.10.450.60:FF:000002">
    <property type="entry name" value="Lipoxygenase"/>
    <property type="match status" value="1"/>
</dbReference>
<dbReference type="Gene3D" id="3.10.450.60">
    <property type="match status" value="1"/>
</dbReference>
<dbReference type="Gene3D" id="4.10.375.10">
    <property type="entry name" value="Lipoxygenase-1, Domain 2"/>
    <property type="match status" value="1"/>
</dbReference>
<dbReference type="Gene3D" id="4.10.372.10">
    <property type="entry name" value="Lipoxygenase-1, Domain 3"/>
    <property type="match status" value="1"/>
</dbReference>
<dbReference type="Gene3D" id="1.20.245.10">
    <property type="entry name" value="Lipoxygenase-1, Domain 5"/>
    <property type="match status" value="1"/>
</dbReference>
<dbReference type="Gene3D" id="2.60.60.20">
    <property type="entry name" value="PLAT/LH2 domain"/>
    <property type="match status" value="1"/>
</dbReference>
<dbReference type="InterPro" id="IPR000907">
    <property type="entry name" value="LipOase"/>
</dbReference>
<dbReference type="InterPro" id="IPR013819">
    <property type="entry name" value="LipOase_C"/>
</dbReference>
<dbReference type="InterPro" id="IPR036226">
    <property type="entry name" value="LipOase_C_sf"/>
</dbReference>
<dbReference type="InterPro" id="IPR020834">
    <property type="entry name" value="LipOase_CS"/>
</dbReference>
<dbReference type="InterPro" id="IPR020833">
    <property type="entry name" value="LipOase_Fe_BS"/>
</dbReference>
<dbReference type="InterPro" id="IPR001246">
    <property type="entry name" value="LipOase_plant"/>
</dbReference>
<dbReference type="InterPro" id="IPR042057">
    <property type="entry name" value="Lipoxy_PLAT/LH2"/>
</dbReference>
<dbReference type="InterPro" id="IPR027433">
    <property type="entry name" value="Lipoxygenase_dom_3"/>
</dbReference>
<dbReference type="InterPro" id="IPR001024">
    <property type="entry name" value="PLAT/LH2_dom"/>
</dbReference>
<dbReference type="InterPro" id="IPR036392">
    <property type="entry name" value="PLAT/LH2_dom_sf"/>
</dbReference>
<dbReference type="PANTHER" id="PTHR11771">
    <property type="entry name" value="LIPOXYGENASE"/>
    <property type="match status" value="1"/>
</dbReference>
<dbReference type="Pfam" id="PF00305">
    <property type="entry name" value="Lipoxygenase"/>
    <property type="match status" value="1"/>
</dbReference>
<dbReference type="Pfam" id="PF01477">
    <property type="entry name" value="PLAT"/>
    <property type="match status" value="1"/>
</dbReference>
<dbReference type="PRINTS" id="PR00087">
    <property type="entry name" value="LIPOXYGENASE"/>
</dbReference>
<dbReference type="PRINTS" id="PR00468">
    <property type="entry name" value="PLTLPOXGNASE"/>
</dbReference>
<dbReference type="SMART" id="SM00308">
    <property type="entry name" value="LH2"/>
    <property type="match status" value="1"/>
</dbReference>
<dbReference type="SUPFAM" id="SSF49723">
    <property type="entry name" value="Lipase/lipooxygenase domain (PLAT/LH2 domain)"/>
    <property type="match status" value="1"/>
</dbReference>
<dbReference type="SUPFAM" id="SSF48484">
    <property type="entry name" value="Lipoxigenase"/>
    <property type="match status" value="1"/>
</dbReference>
<dbReference type="PROSITE" id="PS00711">
    <property type="entry name" value="LIPOXYGENASE_1"/>
    <property type="match status" value="1"/>
</dbReference>
<dbReference type="PROSITE" id="PS00081">
    <property type="entry name" value="LIPOXYGENASE_2"/>
    <property type="match status" value="1"/>
</dbReference>
<dbReference type="PROSITE" id="PS51393">
    <property type="entry name" value="LIPOXYGENASE_3"/>
    <property type="match status" value="1"/>
</dbReference>
<dbReference type="PROSITE" id="PS50095">
    <property type="entry name" value="PLAT"/>
    <property type="match status" value="1"/>
</dbReference>
<comment type="function">
    <text evidence="1">Plant lipoxygenase may be involved in a number of diverse aspects of plant physiology including growth and development, pest resistance, and senescence or responses to wounding. Catalyzes the hydroperoxidation of lipids containing a cis,cis-1,4-pentadiene structure (By similarity).</text>
</comment>
<comment type="catalytic activity">
    <reaction>
        <text>(9Z,12Z)-octadecadienoate + O2 = (13S)-hydroperoxy-(9Z,11E)-octadecadienoate</text>
        <dbReference type="Rhea" id="RHEA:22780"/>
        <dbReference type="ChEBI" id="CHEBI:15379"/>
        <dbReference type="ChEBI" id="CHEBI:30245"/>
        <dbReference type="ChEBI" id="CHEBI:57466"/>
        <dbReference type="EC" id="1.13.11.12"/>
    </reaction>
</comment>
<comment type="catalytic activity">
    <reaction>
        <text>(9Z,12Z,15Z)-octadecatrienoate + O2 = (13S)-hydroperoxy-(9Z,11E,15Z)-octadecatrienoate</text>
        <dbReference type="Rhea" id="RHEA:34495"/>
        <dbReference type="ChEBI" id="CHEBI:15379"/>
        <dbReference type="ChEBI" id="CHEBI:32387"/>
        <dbReference type="ChEBI" id="CHEBI:58757"/>
        <dbReference type="EC" id="1.13.11.12"/>
    </reaction>
</comment>
<comment type="cofactor">
    <cofactor evidence="3">
        <name>Fe cation</name>
        <dbReference type="ChEBI" id="CHEBI:24875"/>
    </cofactor>
    <text evidence="3">Binds 1 Fe cation per subunit. Iron is tightly bound.</text>
</comment>
<comment type="pathway">
    <text evidence="3">Lipid metabolism; oxylipin biosynthesis.</text>
</comment>
<comment type="similarity">
    <text evidence="5">Belongs to the lipoxygenase family.</text>
</comment>